<feature type="chain" id="PRO_1000115614" description="Thiamine thiazole synthase">
    <location>
        <begin position="1"/>
        <end position="261"/>
    </location>
</feature>
<feature type="binding site" description="in other chain" evidence="1">
    <location>
        <position position="33"/>
    </location>
    <ligand>
        <name>NAD(+)</name>
        <dbReference type="ChEBI" id="CHEBI:57540"/>
        <note>ligand shared between two adjacent protomers</note>
    </ligand>
</feature>
<feature type="binding site" description="in other chain" evidence="1">
    <location>
        <begin position="52"/>
        <end position="53"/>
    </location>
    <ligand>
        <name>NAD(+)</name>
        <dbReference type="ChEBI" id="CHEBI:57540"/>
        <note>ligand shared between two adjacent protomers</note>
    </ligand>
</feature>
<feature type="binding site" description="in other chain" evidence="1">
    <location>
        <position position="60"/>
    </location>
    <ligand>
        <name>NAD(+)</name>
        <dbReference type="ChEBI" id="CHEBI:57540"/>
        <note>ligand shared between two adjacent protomers</note>
    </ligand>
</feature>
<feature type="binding site" description="in other chain" evidence="1">
    <location>
        <position position="124"/>
    </location>
    <ligand>
        <name>NAD(+)</name>
        <dbReference type="ChEBI" id="CHEBI:57540"/>
        <note>ligand shared between two adjacent protomers</note>
    </ligand>
</feature>
<feature type="binding site" evidence="1">
    <location>
        <begin position="152"/>
        <end position="154"/>
    </location>
    <ligand>
        <name>NAD(+)</name>
        <dbReference type="ChEBI" id="CHEBI:57540"/>
        <note>ligand shared between two adjacent protomers</note>
    </ligand>
</feature>
<feature type="binding site" evidence="1">
    <location>
        <position position="154"/>
    </location>
    <ligand>
        <name>Fe cation</name>
        <dbReference type="ChEBI" id="CHEBI:24875"/>
        <note>ligand shared between two adjacent protomers</note>
    </ligand>
</feature>
<feature type="binding site" description="in other chain" evidence="1">
    <location>
        <position position="169"/>
    </location>
    <ligand>
        <name>Fe cation</name>
        <dbReference type="ChEBI" id="CHEBI:24875"/>
        <note>ligand shared between two adjacent protomers</note>
    </ligand>
</feature>
<feature type="binding site" description="in other chain" evidence="1">
    <location>
        <position position="219"/>
    </location>
    <ligand>
        <name>NAD(+)</name>
        <dbReference type="ChEBI" id="CHEBI:57540"/>
        <note>ligand shared between two adjacent protomers</note>
    </ligand>
</feature>
<feature type="binding site" evidence="1">
    <location>
        <position position="229"/>
    </location>
    <ligand>
        <name>glycine</name>
        <dbReference type="ChEBI" id="CHEBI:57305"/>
    </ligand>
</feature>
<reference key="1">
    <citation type="submission" date="2007-02" db="EMBL/GenBank/DDBJ databases">
        <title>Complete sequence of Pyrobaculum calidifontis JCM 11548.</title>
        <authorList>
            <consortium name="US DOE Joint Genome Institute"/>
            <person name="Copeland A."/>
            <person name="Lucas S."/>
            <person name="Lapidus A."/>
            <person name="Barry K."/>
            <person name="Glavina del Rio T."/>
            <person name="Dalin E."/>
            <person name="Tice H."/>
            <person name="Pitluck S."/>
            <person name="Chain P."/>
            <person name="Malfatti S."/>
            <person name="Shin M."/>
            <person name="Vergez L."/>
            <person name="Schmutz J."/>
            <person name="Larimer F."/>
            <person name="Land M."/>
            <person name="Hauser L."/>
            <person name="Kyrpides N."/>
            <person name="Mikhailova N."/>
            <person name="Cozen A.E."/>
            <person name="Fitz-Gibbon S.T."/>
            <person name="House C.H."/>
            <person name="Saltikov C."/>
            <person name="Lowe T.M."/>
            <person name="Richardson P."/>
        </authorList>
    </citation>
    <scope>NUCLEOTIDE SEQUENCE [LARGE SCALE GENOMIC DNA]</scope>
    <source>
        <strain>DSM 21063 / JCM 11548 / VA1</strain>
    </source>
</reference>
<sequence length="261" mass="27712">MELKIGRAIIKHGLEDLYEYSDVDVAIVGAGPAGLTAARYLAERGFKVLVFERRFSFGGGIGPGGNMIPKIVVQEEALPILKDFKVRFKPAGDGLYTVDPAELIAKLAAGAIDAGAKILLGVHVDDVIFRGDPPRVAGLLWIWTPIQMSGMHVDPLYTQAKAVIDATGHDAEVVSVAARKVPELGLQLQGEKSAWSEVSEKLVVEHTGRVAPGLYVAGIAVCAVYGLPRMGPIFGGMLMSGRKVAEVVAKDLAEVAYAVRA</sequence>
<name>THI4_PYRCJ</name>
<accession>A3MWF6</accession>
<protein>
    <recommendedName>
        <fullName evidence="1">Thiamine thiazole synthase</fullName>
        <ecNumber evidence="1">2.4.2.59</ecNumber>
    </recommendedName>
</protein>
<keyword id="KW-0408">Iron</keyword>
<keyword id="KW-0479">Metal-binding</keyword>
<keyword id="KW-0520">NAD</keyword>
<keyword id="KW-0784">Thiamine biosynthesis</keyword>
<keyword id="KW-0808">Transferase</keyword>
<evidence type="ECO:0000255" key="1">
    <source>
        <dbReference type="HAMAP-Rule" id="MF_00304"/>
    </source>
</evidence>
<proteinExistence type="inferred from homology"/>
<comment type="function">
    <text evidence="1">Involved in the biosynthesis of the thiazole moiety of thiamine. Catalyzes the conversion of NAD and glycine to adenosine diphosphate 5-(2-hydroxyethyl)-4-methylthiazole-2-carboxylate (ADT), an adenylated thiazole intermediate, using free sulfide as a source of sulfur.</text>
</comment>
<comment type="catalytic activity">
    <reaction evidence="1">
        <text>hydrogen sulfide + glycine + NAD(+) = ADP-5-ethyl-4-methylthiazole-2-carboxylate + nicotinamide + 3 H2O + H(+)</text>
        <dbReference type="Rhea" id="RHEA:55704"/>
        <dbReference type="ChEBI" id="CHEBI:15377"/>
        <dbReference type="ChEBI" id="CHEBI:15378"/>
        <dbReference type="ChEBI" id="CHEBI:17154"/>
        <dbReference type="ChEBI" id="CHEBI:29919"/>
        <dbReference type="ChEBI" id="CHEBI:57305"/>
        <dbReference type="ChEBI" id="CHEBI:57540"/>
        <dbReference type="ChEBI" id="CHEBI:139151"/>
        <dbReference type="EC" id="2.4.2.59"/>
    </reaction>
</comment>
<comment type="cofactor">
    <cofactor evidence="1">
        <name>Fe(2+)</name>
        <dbReference type="ChEBI" id="CHEBI:29033"/>
    </cofactor>
</comment>
<comment type="pathway">
    <text evidence="1">Cofactor biosynthesis; thiamine diphosphate biosynthesis.</text>
</comment>
<comment type="subunit">
    <text evidence="1">Homooctamer; tetramer of dimers.</text>
</comment>
<comment type="similarity">
    <text evidence="1">Belongs to the THI4 family.</text>
</comment>
<dbReference type="EC" id="2.4.2.59" evidence="1"/>
<dbReference type="EMBL" id="CP000561">
    <property type="protein sequence ID" value="ABO08973.1"/>
    <property type="molecule type" value="Genomic_DNA"/>
</dbReference>
<dbReference type="RefSeq" id="WP_011850231.1">
    <property type="nucleotide sequence ID" value="NC_009073.1"/>
</dbReference>
<dbReference type="SMR" id="A3MWF6"/>
<dbReference type="STRING" id="410359.Pcal_1555"/>
<dbReference type="GeneID" id="4910033"/>
<dbReference type="KEGG" id="pcl:Pcal_1555"/>
<dbReference type="eggNOG" id="arCOG00574">
    <property type="taxonomic scope" value="Archaea"/>
</dbReference>
<dbReference type="HOGENOM" id="CLU_053727_2_0_2"/>
<dbReference type="OrthoDB" id="4240at2157"/>
<dbReference type="UniPathway" id="UPA00060"/>
<dbReference type="Proteomes" id="UP000001431">
    <property type="component" value="Chromosome"/>
</dbReference>
<dbReference type="GO" id="GO:0005506">
    <property type="term" value="F:iron ion binding"/>
    <property type="evidence" value="ECO:0007669"/>
    <property type="project" value="UniProtKB-UniRule"/>
</dbReference>
<dbReference type="GO" id="GO:0016763">
    <property type="term" value="F:pentosyltransferase activity"/>
    <property type="evidence" value="ECO:0007669"/>
    <property type="project" value="UniProtKB-UniRule"/>
</dbReference>
<dbReference type="GO" id="GO:0009228">
    <property type="term" value="P:thiamine biosynthetic process"/>
    <property type="evidence" value="ECO:0007669"/>
    <property type="project" value="UniProtKB-KW"/>
</dbReference>
<dbReference type="GO" id="GO:0009229">
    <property type="term" value="P:thiamine diphosphate biosynthetic process"/>
    <property type="evidence" value="ECO:0007669"/>
    <property type="project" value="UniProtKB-UniRule"/>
</dbReference>
<dbReference type="GO" id="GO:0052837">
    <property type="term" value="P:thiazole biosynthetic process"/>
    <property type="evidence" value="ECO:0007669"/>
    <property type="project" value="UniProtKB-UniRule"/>
</dbReference>
<dbReference type="Gene3D" id="3.50.50.60">
    <property type="entry name" value="FAD/NAD(P)-binding domain"/>
    <property type="match status" value="1"/>
</dbReference>
<dbReference type="HAMAP" id="MF_00304">
    <property type="entry name" value="Thi4"/>
    <property type="match status" value="1"/>
</dbReference>
<dbReference type="InterPro" id="IPR036188">
    <property type="entry name" value="FAD/NAD-bd_sf"/>
</dbReference>
<dbReference type="InterPro" id="IPR002922">
    <property type="entry name" value="Thi4_fam"/>
</dbReference>
<dbReference type="InterPro" id="IPR022828">
    <property type="entry name" value="Thi4_prok"/>
</dbReference>
<dbReference type="NCBIfam" id="TIGR00292">
    <property type="entry name" value="sulfide-dependent adenosine diphosphate thiazole synthase"/>
    <property type="match status" value="1"/>
</dbReference>
<dbReference type="PANTHER" id="PTHR43422">
    <property type="entry name" value="THIAMINE THIAZOLE SYNTHASE"/>
    <property type="match status" value="1"/>
</dbReference>
<dbReference type="PANTHER" id="PTHR43422:SF3">
    <property type="entry name" value="THIAMINE THIAZOLE SYNTHASE"/>
    <property type="match status" value="1"/>
</dbReference>
<dbReference type="Pfam" id="PF01946">
    <property type="entry name" value="Thi4"/>
    <property type="match status" value="1"/>
</dbReference>
<dbReference type="PRINTS" id="PR00419">
    <property type="entry name" value="ADXRDTASE"/>
</dbReference>
<dbReference type="SUPFAM" id="SSF51905">
    <property type="entry name" value="FAD/NAD(P)-binding domain"/>
    <property type="match status" value="1"/>
</dbReference>
<organism>
    <name type="scientific">Pyrobaculum calidifontis (strain DSM 21063 / JCM 11548 / VA1)</name>
    <dbReference type="NCBI Taxonomy" id="410359"/>
    <lineage>
        <taxon>Archaea</taxon>
        <taxon>Thermoproteota</taxon>
        <taxon>Thermoprotei</taxon>
        <taxon>Thermoproteales</taxon>
        <taxon>Thermoproteaceae</taxon>
        <taxon>Pyrobaculum</taxon>
    </lineage>
</organism>
<gene>
    <name evidence="1" type="primary">thi4</name>
    <name type="ordered locus">Pcal_1555</name>
</gene>